<comment type="function">
    <text evidence="1">Catalyzes the transfer of the L-Ara4N moiety of the glycolipid undecaprenyl phosphate-alpha-L-Ara4N to lipid A. The modified arabinose is attached to lipid A and is required for resistance to polymyxin and cationic antimicrobial peptides.</text>
</comment>
<comment type="catalytic activity">
    <reaction evidence="1">
        <text>4-amino-4-deoxy-alpha-L-arabinopyranosyl di-trans,octa-cis-undecaprenyl phosphate + lipid IVA = lipid IIA + di-trans,octa-cis-undecaprenyl phosphate.</text>
        <dbReference type="EC" id="2.4.2.43"/>
    </reaction>
</comment>
<comment type="pathway">
    <text evidence="1">Lipopolysaccharide metabolism; 4-amino-4-deoxy-beta-L-arabinose-lipid A biosynthesis.</text>
</comment>
<comment type="subcellular location">
    <subcellularLocation>
        <location evidence="1">Cell inner membrane</location>
        <topology evidence="1">Multi-pass membrane protein</topology>
    </subcellularLocation>
</comment>
<comment type="similarity">
    <text evidence="1">Belongs to the glycosyltransferase 83 family.</text>
</comment>
<keyword id="KW-0997">Cell inner membrane</keyword>
<keyword id="KW-1003">Cell membrane</keyword>
<keyword id="KW-0328">Glycosyltransferase</keyword>
<keyword id="KW-0441">Lipid A biosynthesis</keyword>
<keyword id="KW-0444">Lipid biosynthesis</keyword>
<keyword id="KW-0443">Lipid metabolism</keyword>
<keyword id="KW-0448">Lipopolysaccharide biosynthesis</keyword>
<keyword id="KW-0472">Membrane</keyword>
<keyword id="KW-1185">Reference proteome</keyword>
<keyword id="KW-0808">Transferase</keyword>
<keyword id="KW-0812">Transmembrane</keyword>
<keyword id="KW-1133">Transmembrane helix</keyword>
<sequence length="550" mass="62595">MKSVRYLIGLFTFIACYYLLPISTRLLWQPDETRYAEISREMLASGDWIVPHLLGLRYFEKPIAGYWINSIGQWLFGANNFGVRAGVIFATLLTAALVTWFTLRLWRNKRLALLATVIYLSLFIVYAIGTYAVLDPFIAFWLVAGMCSFWLAMQAQTWKGKSAGFLLLGITCGMGVMTKGFLALAVPVLSVLPWVATQKRWKDLFIYGWLAVISCVLTVLPWGLAIAQREPDFWHYFFWVEHIQRFALDDAQHRAPFWYYLPVIIAGSLPWLGLLPGALYAGWKNRKHSATVYLLSWTIMPLLFFSVAKGKLPTYILSCFAPLAMLMAHYALLAAKNNPLALRINGWINIAFGVTGIIATFVVSPWGPMNTPVWQTFESYKVFCAWSIFSLWAFFGWYTLTNVEKTWPFAALCPLGLALLVGFSIPDRVMEGKHPQFFVEMTQESLQPSRYILTDSVGVAAGLAWSLQRDDIIMYRQTGELKYGLNYPDAKGRFVSGDEFANWLNQHRQEGIITLVLSVDRDEDINSLAIPPADVIDRQERLVLIQYRPK</sequence>
<feature type="chain" id="PRO_0000379996" description="Undecaprenyl phosphate-alpha-4-amino-4-deoxy-L-arabinose arabinosyl transferase">
    <location>
        <begin position="1"/>
        <end position="550"/>
    </location>
</feature>
<feature type="transmembrane region" description="Helical" evidence="1">
    <location>
        <begin position="7"/>
        <end position="27"/>
    </location>
</feature>
<feature type="transmembrane region" description="Helical" evidence="1">
    <location>
        <begin position="81"/>
        <end position="101"/>
    </location>
</feature>
<feature type="transmembrane region" description="Helical" evidence="1">
    <location>
        <begin position="111"/>
        <end position="133"/>
    </location>
</feature>
<feature type="transmembrane region" description="Helical" evidence="1">
    <location>
        <begin position="137"/>
        <end position="154"/>
    </location>
</feature>
<feature type="transmembrane region" description="Helical" evidence="1">
    <location>
        <begin position="165"/>
        <end position="185"/>
    </location>
</feature>
<feature type="transmembrane region" description="Helical" evidence="1">
    <location>
        <begin position="204"/>
        <end position="224"/>
    </location>
</feature>
<feature type="transmembrane region" description="Helical" evidence="1">
    <location>
        <begin position="263"/>
        <end position="283"/>
    </location>
</feature>
<feature type="transmembrane region" description="Helical" evidence="1">
    <location>
        <begin position="288"/>
        <end position="308"/>
    </location>
</feature>
<feature type="transmembrane region" description="Helical" evidence="1">
    <location>
        <begin position="315"/>
        <end position="335"/>
    </location>
</feature>
<feature type="transmembrane region" description="Helical" evidence="1">
    <location>
        <begin position="346"/>
        <end position="366"/>
    </location>
</feature>
<feature type="transmembrane region" description="Helical" evidence="1">
    <location>
        <begin position="382"/>
        <end position="402"/>
    </location>
</feature>
<feature type="transmembrane region" description="Helical" evidence="1">
    <location>
        <begin position="406"/>
        <end position="426"/>
    </location>
</feature>
<evidence type="ECO:0000255" key="1">
    <source>
        <dbReference type="HAMAP-Rule" id="MF_01165"/>
    </source>
</evidence>
<gene>
    <name evidence="1" type="primary">arnT</name>
    <name type="ordered locus">ECS88_2407</name>
</gene>
<dbReference type="EC" id="2.4.2.43" evidence="1"/>
<dbReference type="EMBL" id="CU928161">
    <property type="protein sequence ID" value="CAR03686.1"/>
    <property type="molecule type" value="Genomic_DNA"/>
</dbReference>
<dbReference type="RefSeq" id="WP_000844085.1">
    <property type="nucleotide sequence ID" value="NC_011742.1"/>
</dbReference>
<dbReference type="SMR" id="B7MG24"/>
<dbReference type="CAZy" id="GT83">
    <property type="family name" value="Glycosyltransferase Family 83"/>
</dbReference>
<dbReference type="KEGG" id="ecz:ECS88_2407"/>
<dbReference type="HOGENOM" id="CLU_019200_2_1_6"/>
<dbReference type="UniPathway" id="UPA00037"/>
<dbReference type="Proteomes" id="UP000000747">
    <property type="component" value="Chromosome"/>
</dbReference>
<dbReference type="GO" id="GO:0005886">
    <property type="term" value="C:plasma membrane"/>
    <property type="evidence" value="ECO:0007669"/>
    <property type="project" value="UniProtKB-SubCell"/>
</dbReference>
<dbReference type="GO" id="GO:0103015">
    <property type="term" value="F:4-amino-4-deoxy-L-arabinose transferase activity"/>
    <property type="evidence" value="ECO:0007669"/>
    <property type="project" value="UniProtKB-EC"/>
</dbReference>
<dbReference type="GO" id="GO:0000030">
    <property type="term" value="F:mannosyltransferase activity"/>
    <property type="evidence" value="ECO:0007669"/>
    <property type="project" value="InterPro"/>
</dbReference>
<dbReference type="GO" id="GO:0009245">
    <property type="term" value="P:lipid A biosynthetic process"/>
    <property type="evidence" value="ECO:0007669"/>
    <property type="project" value="UniProtKB-UniRule"/>
</dbReference>
<dbReference type="GO" id="GO:0009103">
    <property type="term" value="P:lipopolysaccharide biosynthetic process"/>
    <property type="evidence" value="ECO:0007669"/>
    <property type="project" value="UniProtKB-KW"/>
</dbReference>
<dbReference type="GO" id="GO:0006493">
    <property type="term" value="P:protein O-linked glycosylation"/>
    <property type="evidence" value="ECO:0007669"/>
    <property type="project" value="InterPro"/>
</dbReference>
<dbReference type="GO" id="GO:0010041">
    <property type="term" value="P:response to iron(III) ion"/>
    <property type="evidence" value="ECO:0007669"/>
    <property type="project" value="TreeGrafter"/>
</dbReference>
<dbReference type="HAMAP" id="MF_01165">
    <property type="entry name" value="ArnT_transfer"/>
    <property type="match status" value="1"/>
</dbReference>
<dbReference type="InterPro" id="IPR022839">
    <property type="entry name" value="ArnT_tfrase"/>
</dbReference>
<dbReference type="InterPro" id="IPR003342">
    <property type="entry name" value="Glyco_trans_39/83"/>
</dbReference>
<dbReference type="InterPro" id="IPR050297">
    <property type="entry name" value="LipidA_mod_glycosyltrf_83"/>
</dbReference>
<dbReference type="NCBIfam" id="NF009784">
    <property type="entry name" value="PRK13279.1"/>
    <property type="match status" value="1"/>
</dbReference>
<dbReference type="PANTHER" id="PTHR33908">
    <property type="entry name" value="MANNOSYLTRANSFERASE YKCB-RELATED"/>
    <property type="match status" value="1"/>
</dbReference>
<dbReference type="PANTHER" id="PTHR33908:SF3">
    <property type="entry name" value="UNDECAPRENYL PHOSPHATE-ALPHA-4-AMINO-4-DEOXY-L-ARABINOSE ARABINOSYL TRANSFERASE"/>
    <property type="match status" value="1"/>
</dbReference>
<dbReference type="Pfam" id="PF02366">
    <property type="entry name" value="PMT"/>
    <property type="match status" value="1"/>
</dbReference>
<reference key="1">
    <citation type="journal article" date="2009" name="PLoS Genet.">
        <title>Organised genome dynamics in the Escherichia coli species results in highly diverse adaptive paths.</title>
        <authorList>
            <person name="Touchon M."/>
            <person name="Hoede C."/>
            <person name="Tenaillon O."/>
            <person name="Barbe V."/>
            <person name="Baeriswyl S."/>
            <person name="Bidet P."/>
            <person name="Bingen E."/>
            <person name="Bonacorsi S."/>
            <person name="Bouchier C."/>
            <person name="Bouvet O."/>
            <person name="Calteau A."/>
            <person name="Chiapello H."/>
            <person name="Clermont O."/>
            <person name="Cruveiller S."/>
            <person name="Danchin A."/>
            <person name="Diard M."/>
            <person name="Dossat C."/>
            <person name="Karoui M.E."/>
            <person name="Frapy E."/>
            <person name="Garry L."/>
            <person name="Ghigo J.M."/>
            <person name="Gilles A.M."/>
            <person name="Johnson J."/>
            <person name="Le Bouguenec C."/>
            <person name="Lescat M."/>
            <person name="Mangenot S."/>
            <person name="Martinez-Jehanne V."/>
            <person name="Matic I."/>
            <person name="Nassif X."/>
            <person name="Oztas S."/>
            <person name="Petit M.A."/>
            <person name="Pichon C."/>
            <person name="Rouy Z."/>
            <person name="Ruf C.S."/>
            <person name="Schneider D."/>
            <person name="Tourret J."/>
            <person name="Vacherie B."/>
            <person name="Vallenet D."/>
            <person name="Medigue C."/>
            <person name="Rocha E.P.C."/>
            <person name="Denamur E."/>
        </authorList>
    </citation>
    <scope>NUCLEOTIDE SEQUENCE [LARGE SCALE GENOMIC DNA]</scope>
    <source>
        <strain>S88 / ExPEC</strain>
    </source>
</reference>
<accession>B7MG24</accession>
<proteinExistence type="inferred from homology"/>
<protein>
    <recommendedName>
        <fullName evidence="1">Undecaprenyl phosphate-alpha-4-amino-4-deoxy-L-arabinose arabinosyl transferase</fullName>
        <ecNumber evidence="1">2.4.2.43</ecNumber>
    </recommendedName>
    <alternativeName>
        <fullName evidence="1">4-amino-4-deoxy-L-arabinose lipid A transferase</fullName>
    </alternativeName>
    <alternativeName>
        <fullName evidence="1">Lipid IV(A) 4-amino-4-deoxy-L-arabinosyltransferase</fullName>
    </alternativeName>
    <alternativeName>
        <fullName evidence="1">Undecaprenyl phosphate-alpha-L-Ara4N transferase</fullName>
    </alternativeName>
</protein>
<organism>
    <name type="scientific">Escherichia coli O45:K1 (strain S88 / ExPEC)</name>
    <dbReference type="NCBI Taxonomy" id="585035"/>
    <lineage>
        <taxon>Bacteria</taxon>
        <taxon>Pseudomonadati</taxon>
        <taxon>Pseudomonadota</taxon>
        <taxon>Gammaproteobacteria</taxon>
        <taxon>Enterobacterales</taxon>
        <taxon>Enterobacteriaceae</taxon>
        <taxon>Escherichia</taxon>
    </lineage>
</organism>
<name>ARNT_ECO45</name>